<gene>
    <name type="primary">scpA</name>
</gene>
<sequence length="1167" mass="128264">MRKKQKLPFDKLAIALMSTSILLNAQSDIKANTVTEDTPVTEQAVETPQPTAVSEEVPSSKETKTPQTPDDAEETIADDANDLAPQAPAKTADTPATSKATIRDLNDPSQVKTLQEKAGKGAGTVVAVIDAGFDKNHEAWRLTDKTKARYQSKEDLEKAKKEHGITYGEWVNDKVAYYHDYSKDGKTAVDQEHGTHVSGILSGNAPSETKEPYRLEGAMPEAQLLLMRVEIVNGLADYARNYAQAIRDAVNLGAKVINMSFGNAALAYANLPDETKKAFDYAKSKGVSIVTSAGNDSSFGGKTRLPLADHPDYGVVGTPAAADSTLTVASYSPDKQLTETAMVKTDDQQDKEMPVLSTNRFEPNKAYDYAYANRGMKEDDFKDVKGKIALIERGDIDFKDKVANAKKAGAVGVLIYDNQDKGFPIELPNVDQMPAAFISRKDGLLLKDNPQKTITFNATPKVLPTASGTKLSRFSSWGLTADGNIKPDIAAPGQDILSSVANNKYAKLSGTSMSAPLVAGIMGLLQKQYETQYPDMTPSERLDLAKKVLMSSATALYDEDEKAYFSPRQQGAGAVDAKKASAATMYVTDKDNTSSKVHLNNVSDKFEVTVTVHNKSDKPQELYYQATVQTDKVDGKHFALAPKVLYEASWQKITIPANSSKQVTVPIDASRFSKDLLAQMKNGYFLEGFVRFKQDPTKEELMSIPYIGFRGDFGNLSAVEKPIYDSKDGSSYYHEANSDAKDQLDGDGLQFYALKNNFTALTTESNPWTIIKAVKEGVENIEDIESSEITETIFAGTFAKQDDDSHYYIHRHANGEPYAAISPNGDGNRDYVQFQGTFLRNAKNLVAEVLDKEGNVVWTSEVTEQVVKNYNNDLASTLGSTRFEKTRWDGKDKDGKVVANGTYTYRVRYTPISSGAKEQHTDFDVIVDNTTPEVATSATFSTEDRRLTLASKPKTSQPVYRERIAYTYMDEDLPTTEYISPNEDGTFTLPEEAETMEGATVPLKMSDFTYVVEDMAGNITYTPVTKLLEGHSNKPEQDGSGQTPDKKPEAKPEQDGSDQAPDKKPEAKPEQDGSGQTPDKKPETKPEKDSSGQTPGKTPQKGQPSRTLEKRSSKRALATKASTRDQLPTTNDKDTNRLHLLKLVMTTFFFGLVAHIFKTKRQKETKK</sequence>
<organism>
    <name type="scientific">Streptococcus pyogenes</name>
    <dbReference type="NCBI Taxonomy" id="1314"/>
    <lineage>
        <taxon>Bacteria</taxon>
        <taxon>Bacillati</taxon>
        <taxon>Bacillota</taxon>
        <taxon>Bacilli</taxon>
        <taxon>Lactobacillales</taxon>
        <taxon>Streptococcaceae</taxon>
        <taxon>Streptococcus</taxon>
    </lineage>
</organism>
<evidence type="ECO:0000250" key="1">
    <source>
        <dbReference type="UniProtKB" id="P58099"/>
    </source>
</evidence>
<evidence type="ECO:0000255" key="2">
    <source>
        <dbReference type="PROSITE-ProRule" id="PRU00477"/>
    </source>
</evidence>
<evidence type="ECO:0000255" key="3">
    <source>
        <dbReference type="PROSITE-ProRule" id="PRU01240"/>
    </source>
</evidence>
<evidence type="ECO:0000256" key="4">
    <source>
        <dbReference type="SAM" id="MobiDB-lite"/>
    </source>
</evidence>
<evidence type="ECO:0000269" key="5">
    <source>
    </source>
</evidence>
<evidence type="ECO:0000269" key="6">
    <source>
    </source>
</evidence>
<evidence type="ECO:0000303" key="7">
    <source>
    </source>
</evidence>
<evidence type="ECO:0000305" key="8"/>
<evidence type="ECO:0007829" key="9">
    <source>
        <dbReference type="PDB" id="1XF1"/>
    </source>
</evidence>
<evidence type="ECO:0007829" key="10">
    <source>
        <dbReference type="PDB" id="7YZX"/>
    </source>
</evidence>
<accession>P15926</accession>
<feature type="signal peptide" evidence="5">
    <location>
        <begin position="1"/>
        <end position="31"/>
    </location>
</feature>
<feature type="chain" id="PRO_0000027151" description="C5a peptidase">
    <location>
        <begin position="32"/>
        <end position="1130"/>
    </location>
</feature>
<feature type="propeptide" id="PRO_0000027152" description="Removed by sortase" evidence="2">
    <location>
        <begin position="1131"/>
        <end position="1167"/>
    </location>
</feature>
<feature type="domain" description="Peptidase S8" evidence="3">
    <location>
        <begin position="99"/>
        <end position="581"/>
    </location>
</feature>
<feature type="repeat" description="1">
    <location>
        <begin position="1034"/>
        <end position="1050"/>
    </location>
</feature>
<feature type="repeat" description="2">
    <location>
        <begin position="1051"/>
        <end position="1067"/>
    </location>
</feature>
<feature type="repeat" description="3">
    <location>
        <begin position="1068"/>
        <end position="1084"/>
    </location>
</feature>
<feature type="repeat" description="4">
    <location>
        <begin position="1085"/>
        <end position="1101"/>
    </location>
</feature>
<feature type="region of interest" description="Disordered" evidence="4">
    <location>
        <begin position="34"/>
        <end position="73"/>
    </location>
</feature>
<feature type="region of interest" description="Disordered" evidence="4">
    <location>
        <begin position="1029"/>
        <end position="1133"/>
    </location>
</feature>
<feature type="region of interest" description="4 X 17 AA tandem repeats">
    <location>
        <begin position="1034"/>
        <end position="1101"/>
    </location>
</feature>
<feature type="short sequence motif" description="LPXTG sorting signal" evidence="2">
    <location>
        <begin position="1127"/>
        <end position="1131"/>
    </location>
</feature>
<feature type="compositionally biased region" description="Polar residues" evidence="4">
    <location>
        <begin position="34"/>
        <end position="52"/>
    </location>
</feature>
<feature type="compositionally biased region" description="Basic and acidic residues" evidence="4">
    <location>
        <begin position="1044"/>
        <end position="1071"/>
    </location>
</feature>
<feature type="compositionally biased region" description="Basic and acidic residues" evidence="4">
    <location>
        <begin position="1078"/>
        <end position="1090"/>
    </location>
</feature>
<feature type="compositionally biased region" description="Polar residues" evidence="4">
    <location>
        <begin position="1092"/>
        <end position="1106"/>
    </location>
</feature>
<feature type="compositionally biased region" description="Polar residues" evidence="4">
    <location>
        <begin position="1120"/>
        <end position="1130"/>
    </location>
</feature>
<feature type="active site" description="Charge relay system" evidence="3">
    <location>
        <position position="130"/>
    </location>
</feature>
<feature type="active site" description="Charge relay system" evidence="3">
    <location>
        <position position="193"/>
    </location>
</feature>
<feature type="active site" description="Charge relay system" evidence="3">
    <location>
        <position position="512"/>
    </location>
</feature>
<feature type="modified residue" description="Pentaglycyl murein peptidoglycan amidated threonine" evidence="2">
    <location>
        <position position="1130"/>
    </location>
</feature>
<feature type="helix" evidence="10">
    <location>
        <begin position="102"/>
        <end position="105"/>
    </location>
</feature>
<feature type="helix" evidence="9">
    <location>
        <begin position="112"/>
        <end position="118"/>
    </location>
</feature>
<feature type="strand" evidence="9">
    <location>
        <begin position="125"/>
        <end position="131"/>
    </location>
</feature>
<feature type="helix" evidence="10">
    <location>
        <begin position="145"/>
        <end position="147"/>
    </location>
</feature>
<feature type="helix" evidence="9">
    <location>
        <begin position="152"/>
        <end position="161"/>
    </location>
</feature>
<feature type="turn" evidence="9">
    <location>
        <begin position="162"/>
        <end position="164"/>
    </location>
</feature>
<feature type="strand" evidence="9">
    <location>
        <begin position="172"/>
        <end position="174"/>
    </location>
</feature>
<feature type="strand" evidence="9">
    <location>
        <begin position="177"/>
        <end position="181"/>
    </location>
</feature>
<feature type="turn" evidence="9">
    <location>
        <begin position="192"/>
        <end position="195"/>
    </location>
</feature>
<feature type="helix" evidence="9">
    <location>
        <begin position="196"/>
        <end position="199"/>
    </location>
</feature>
<feature type="strand" evidence="10">
    <location>
        <begin position="209"/>
        <end position="214"/>
    </location>
</feature>
<feature type="turn" evidence="9">
    <location>
        <begin position="215"/>
        <end position="218"/>
    </location>
</feature>
<feature type="strand" evidence="9">
    <location>
        <begin position="222"/>
        <end position="228"/>
    </location>
</feature>
<feature type="helix" evidence="9">
    <location>
        <begin position="235"/>
        <end position="251"/>
    </location>
</feature>
<feature type="strand" evidence="9">
    <location>
        <begin position="255"/>
        <end position="259"/>
    </location>
</feature>
<feature type="helix" evidence="10">
    <location>
        <begin position="268"/>
        <end position="270"/>
    </location>
</feature>
<feature type="helix" evidence="9">
    <location>
        <begin position="273"/>
        <end position="284"/>
    </location>
</feature>
<feature type="strand" evidence="9">
    <location>
        <begin position="288"/>
        <end position="292"/>
    </location>
</feature>
<feature type="turn" evidence="9">
    <location>
        <begin position="320"/>
        <end position="322"/>
    </location>
</feature>
<feature type="strand" evidence="9">
    <location>
        <begin position="325"/>
        <end position="332"/>
    </location>
</feature>
<feature type="strand" evidence="9">
    <location>
        <begin position="334"/>
        <end position="344"/>
    </location>
</feature>
<feature type="turn" evidence="10">
    <location>
        <begin position="346"/>
        <end position="348"/>
    </location>
</feature>
<feature type="strand" evidence="9">
    <location>
        <begin position="350"/>
        <end position="359"/>
    </location>
</feature>
<feature type="strand" evidence="9">
    <location>
        <begin position="367"/>
        <end position="371"/>
    </location>
</feature>
<feature type="turn" evidence="9">
    <location>
        <begin position="378"/>
        <end position="383"/>
    </location>
</feature>
<feature type="strand" evidence="9">
    <location>
        <begin position="387"/>
        <end position="392"/>
    </location>
</feature>
<feature type="helix" evidence="9">
    <location>
        <begin position="398"/>
        <end position="407"/>
    </location>
</feature>
<feature type="strand" evidence="9">
    <location>
        <begin position="411"/>
        <end position="416"/>
    </location>
</feature>
<feature type="strand" evidence="9">
    <location>
        <begin position="435"/>
        <end position="438"/>
    </location>
</feature>
<feature type="helix" evidence="9">
    <location>
        <begin position="440"/>
        <end position="448"/>
    </location>
</feature>
<feature type="strand" evidence="9">
    <location>
        <begin position="453"/>
        <end position="456"/>
    </location>
</feature>
<feature type="strand" evidence="9">
    <location>
        <begin position="461"/>
        <end position="464"/>
    </location>
</feature>
<feature type="strand" evidence="10">
    <location>
        <begin position="469"/>
        <end position="471"/>
    </location>
</feature>
<feature type="strand" evidence="9">
    <location>
        <begin position="489"/>
        <end position="492"/>
    </location>
</feature>
<feature type="strand" evidence="9">
    <location>
        <begin position="496"/>
        <end position="501"/>
    </location>
</feature>
<feature type="strand" evidence="9">
    <location>
        <begin position="503"/>
        <end position="505"/>
    </location>
</feature>
<feature type="strand" evidence="9">
    <location>
        <begin position="507"/>
        <end position="510"/>
    </location>
</feature>
<feature type="helix" evidence="9">
    <location>
        <begin position="514"/>
        <end position="531"/>
    </location>
</feature>
<feature type="strand" evidence="9">
    <location>
        <begin position="532"/>
        <end position="536"/>
    </location>
</feature>
<feature type="helix" evidence="9">
    <location>
        <begin position="537"/>
        <end position="552"/>
    </location>
</feature>
<feature type="helix" evidence="9">
    <location>
        <begin position="559"/>
        <end position="561"/>
    </location>
</feature>
<feature type="helix" evidence="9">
    <location>
        <begin position="567"/>
        <end position="570"/>
    </location>
</feature>
<feature type="helix" evidence="9">
    <location>
        <begin position="577"/>
        <end position="582"/>
    </location>
</feature>
<feature type="strand" evidence="9">
    <location>
        <begin position="584"/>
        <end position="593"/>
    </location>
</feature>
<feature type="strand" evidence="9">
    <location>
        <begin position="597"/>
        <end position="602"/>
    </location>
</feature>
<feature type="strand" evidence="9">
    <location>
        <begin position="604"/>
        <end position="614"/>
    </location>
</feature>
<feature type="strand" evidence="9">
    <location>
        <begin position="616"/>
        <end position="618"/>
    </location>
</feature>
<feature type="strand" evidence="9">
    <location>
        <begin position="620"/>
        <end position="634"/>
    </location>
</feature>
<feature type="strand" evidence="9">
    <location>
        <begin position="637"/>
        <end position="647"/>
    </location>
</feature>
<feature type="strand" evidence="9">
    <location>
        <begin position="651"/>
        <end position="655"/>
    </location>
</feature>
<feature type="strand" evidence="9">
    <location>
        <begin position="659"/>
        <end position="668"/>
    </location>
</feature>
<feature type="helix" evidence="9">
    <location>
        <begin position="670"/>
        <end position="672"/>
    </location>
</feature>
<feature type="helix" evidence="9">
    <location>
        <begin position="673"/>
        <end position="679"/>
    </location>
</feature>
<feature type="strand" evidence="9">
    <location>
        <begin position="684"/>
        <end position="695"/>
    </location>
</feature>
<feature type="strand" evidence="9">
    <location>
        <begin position="702"/>
        <end position="711"/>
    </location>
</feature>
<feature type="helix" evidence="9">
    <location>
        <begin position="713"/>
        <end position="715"/>
    </location>
</feature>
<feature type="helix" evidence="9">
    <location>
        <begin position="723"/>
        <end position="725"/>
    </location>
</feature>
<feature type="strand" evidence="9">
    <location>
        <begin position="727"/>
        <end position="729"/>
    </location>
</feature>
<feature type="strand" evidence="9">
    <location>
        <begin position="758"/>
        <end position="765"/>
    </location>
</feature>
<feature type="helix" evidence="9">
    <location>
        <begin position="768"/>
        <end position="776"/>
    </location>
</feature>
<feature type="strand" evidence="9">
    <location>
        <begin position="791"/>
        <end position="794"/>
    </location>
</feature>
<feature type="strand" evidence="9">
    <location>
        <begin position="797"/>
        <end position="799"/>
    </location>
</feature>
<feature type="strand" evidence="9">
    <location>
        <begin position="807"/>
        <end position="809"/>
    </location>
</feature>
<feature type="strand" evidence="10">
    <location>
        <begin position="813"/>
        <end position="815"/>
    </location>
</feature>
<feature type="strand" evidence="9">
    <location>
        <begin position="819"/>
        <end position="821"/>
    </location>
</feature>
<feature type="strand" evidence="9">
    <location>
        <begin position="824"/>
        <end position="829"/>
    </location>
</feature>
<feature type="strand" evidence="9">
    <location>
        <begin position="832"/>
        <end position="836"/>
    </location>
</feature>
<feature type="strand" evidence="9">
    <location>
        <begin position="838"/>
        <end position="840"/>
    </location>
</feature>
<feature type="strand" evidence="9">
    <location>
        <begin position="842"/>
        <end position="850"/>
    </location>
</feature>
<feature type="strand" evidence="10">
    <location>
        <begin position="852"/>
        <end position="854"/>
    </location>
</feature>
<feature type="strand" evidence="9">
    <location>
        <begin position="856"/>
        <end position="859"/>
    </location>
</feature>
<feature type="strand" evidence="9">
    <location>
        <begin position="863"/>
        <end position="866"/>
    </location>
</feature>
<feature type="turn" evidence="9">
    <location>
        <begin position="874"/>
        <end position="876"/>
    </location>
</feature>
<feature type="strand" evidence="9">
    <location>
        <begin position="879"/>
        <end position="882"/>
    </location>
</feature>
<feature type="helix" evidence="9">
    <location>
        <begin position="884"/>
        <end position="886"/>
    </location>
</feature>
<feature type="strand" evidence="9">
    <location>
        <begin position="900"/>
        <end position="913"/>
    </location>
</feature>
<feature type="strand" evidence="9">
    <location>
        <begin position="919"/>
        <end position="927"/>
    </location>
</feature>
<feature type="strand" evidence="9">
    <location>
        <begin position="938"/>
        <end position="940"/>
    </location>
</feature>
<feature type="turn" evidence="9">
    <location>
        <begin position="942"/>
        <end position="944"/>
    </location>
</feature>
<feature type="strand" evidence="9">
    <location>
        <begin position="946"/>
        <end position="949"/>
    </location>
</feature>
<feature type="strand" evidence="9">
    <location>
        <begin position="959"/>
        <end position="972"/>
    </location>
</feature>
<feature type="strand" evidence="9">
    <location>
        <begin position="974"/>
        <end position="979"/>
    </location>
</feature>
<feature type="strand" evidence="9">
    <location>
        <begin position="991"/>
        <end position="994"/>
    </location>
</feature>
<feature type="strand" evidence="9">
    <location>
        <begin position="1000"/>
        <end position="1002"/>
    </location>
</feature>
<feature type="helix" evidence="9">
    <location>
        <begin position="1005"/>
        <end position="1007"/>
    </location>
</feature>
<feature type="strand" evidence="9">
    <location>
        <begin position="1009"/>
        <end position="1014"/>
    </location>
</feature>
<feature type="strand" evidence="9">
    <location>
        <begin position="1019"/>
        <end position="1023"/>
    </location>
</feature>
<feature type="helix" evidence="9">
    <location>
        <begin position="1024"/>
        <end position="1028"/>
    </location>
</feature>
<name>C5AP_STRPY</name>
<keyword id="KW-0002">3D-structure</keyword>
<keyword id="KW-0134">Cell wall</keyword>
<keyword id="KW-0903">Direct protein sequencing</keyword>
<keyword id="KW-0378">Hydrolase</keyword>
<keyword id="KW-0572">Peptidoglycan-anchor</keyword>
<keyword id="KW-0645">Protease</keyword>
<keyword id="KW-0677">Repeat</keyword>
<keyword id="KW-0964">Secreted</keyword>
<keyword id="KW-0720">Serine protease</keyword>
<keyword id="KW-0732">Signal</keyword>
<keyword id="KW-0843">Virulence</keyword>
<reference key="1">
    <citation type="journal article" date="1990" name="J. Biol. Chem.">
        <title>Complete nucleotide sequence of the streptococcal C5a peptidase gene of Streptococcus pyogenes.</title>
        <authorList>
            <person name="Chen C.C."/>
            <person name="Cleary P.P."/>
        </authorList>
    </citation>
    <scope>NUCLEOTIDE SEQUENCE [GENOMIC DNA]</scope>
    <scope>PROTEIN SEQUENCE OF 32-41</scope>
    <scope>FUNCTION</scope>
</reference>
<reference key="2">
    <citation type="journal article" date="1985" name="Proc. Natl. Acad. Sci. U.S.A.">
        <title>Mechanism of action of the group A streptococcal C5a inactivator.</title>
        <authorList>
            <person name="Wexler D.E."/>
            <person name="Chenoweth D.E."/>
            <person name="Cleary P.P."/>
        </authorList>
    </citation>
    <scope>FUNCTION</scope>
    <scope>CATALYTIC ACTIVITY</scope>
</reference>
<comment type="function">
    <text evidence="5 6">This virulence factor of S.pyogenes specifically cleaves the human serum chemotaxin C5a at '68-Lys-|-Asp-69' bond near its C-terminus, destroying its ability to serve as a chemoattractant.</text>
</comment>
<comment type="catalytic activity">
    <reaction evidence="6">
        <text>The primary cleavage site is at 67-His-|-Lys-68 in human C5a with a minor secondary cleavage site at 58-Ala-|-Ser-59.</text>
        <dbReference type="EC" id="3.4.21.110"/>
    </reaction>
</comment>
<comment type="subcellular location">
    <subcellularLocation>
        <location evidence="2">Secreted</location>
        <location evidence="2">Cell wall</location>
        <topology evidence="2">Peptidoglycan-anchor</topology>
    </subcellularLocation>
</comment>
<comment type="PTM">
    <text evidence="1">Cleaved by SpeB protease; leading to its degradation. Degradation by SpeB is probably strictly regulated to preserve integrity of C5a peptidase.</text>
</comment>
<comment type="similarity">
    <text evidence="8">Belongs to the peptidase S8 family.</text>
</comment>
<dbReference type="EC" id="3.4.21.110" evidence="6"/>
<dbReference type="EMBL" id="J05229">
    <property type="protein sequence ID" value="AAA26960.1"/>
    <property type="molecule type" value="Genomic_DNA"/>
</dbReference>
<dbReference type="PIR" id="A35066">
    <property type="entry name" value="A35066"/>
</dbReference>
<dbReference type="PDB" id="1XF1">
    <property type="method" value="X-ray"/>
    <property type="resolution" value="1.90 A"/>
    <property type="chains" value="A/B=106-1031"/>
</dbReference>
<dbReference type="PDB" id="3EIF">
    <property type="method" value="X-ray"/>
    <property type="resolution" value="1.90 A"/>
    <property type="chains" value="A=97-1032"/>
</dbReference>
<dbReference type="PDB" id="7YZX">
    <property type="method" value="X-ray"/>
    <property type="resolution" value="1.90 A"/>
    <property type="chains" value="A/B=32-1032"/>
</dbReference>
<dbReference type="PDBsum" id="1XF1"/>
<dbReference type="PDBsum" id="3EIF"/>
<dbReference type="PDBsum" id="7YZX"/>
<dbReference type="SMR" id="P15926"/>
<dbReference type="STRING" id="1314.SD89_08950"/>
<dbReference type="MEROPS" id="S08.020"/>
<dbReference type="eggNOG" id="COG1404">
    <property type="taxonomic scope" value="Bacteria"/>
</dbReference>
<dbReference type="eggNOG" id="COG3087">
    <property type="taxonomic scope" value="Bacteria"/>
</dbReference>
<dbReference type="OMA" id="MHGMHVA"/>
<dbReference type="SABIO-RK" id="P15926"/>
<dbReference type="EvolutionaryTrace" id="P15926"/>
<dbReference type="PHI-base" id="PHI:7312"/>
<dbReference type="GO" id="GO:0005576">
    <property type="term" value="C:extracellular region"/>
    <property type="evidence" value="ECO:0007669"/>
    <property type="project" value="UniProtKB-KW"/>
</dbReference>
<dbReference type="GO" id="GO:0016020">
    <property type="term" value="C:membrane"/>
    <property type="evidence" value="ECO:0007669"/>
    <property type="project" value="InterPro"/>
</dbReference>
<dbReference type="GO" id="GO:0004252">
    <property type="term" value="F:serine-type endopeptidase activity"/>
    <property type="evidence" value="ECO:0000314"/>
    <property type="project" value="UniProtKB"/>
</dbReference>
<dbReference type="GO" id="GO:0090729">
    <property type="term" value="F:toxin activity"/>
    <property type="evidence" value="ECO:0000314"/>
    <property type="project" value="UniProtKB"/>
</dbReference>
<dbReference type="GO" id="GO:0006508">
    <property type="term" value="P:proteolysis"/>
    <property type="evidence" value="ECO:0007669"/>
    <property type="project" value="UniProtKB-KW"/>
</dbReference>
<dbReference type="GO" id="GO:0052170">
    <property type="term" value="P:symbiont-mediated suppression of host innate immune response"/>
    <property type="evidence" value="ECO:0000314"/>
    <property type="project" value="UniProtKB"/>
</dbReference>
<dbReference type="CDD" id="cd02133">
    <property type="entry name" value="PA_C5a_like"/>
    <property type="match status" value="1"/>
</dbReference>
<dbReference type="CDD" id="cd07475">
    <property type="entry name" value="Peptidases_S8_C5a_Peptidase"/>
    <property type="match status" value="1"/>
</dbReference>
<dbReference type="Gene3D" id="2.60.40.4070">
    <property type="match status" value="1"/>
</dbReference>
<dbReference type="Gene3D" id="3.50.30.30">
    <property type="match status" value="1"/>
</dbReference>
<dbReference type="Gene3D" id="2.60.40.10">
    <property type="entry name" value="Immunoglobulins"/>
    <property type="match status" value="1"/>
</dbReference>
<dbReference type="Gene3D" id="3.40.50.200">
    <property type="entry name" value="Peptidase S8/S53 domain"/>
    <property type="match status" value="1"/>
</dbReference>
<dbReference type="Gene3D" id="2.60.40.1710">
    <property type="entry name" value="Subtilisin-like superfamily"/>
    <property type="match status" value="1"/>
</dbReference>
<dbReference type="InterPro" id="IPR010435">
    <property type="entry name" value="C5a/SBT2-like_Fn3"/>
</dbReference>
<dbReference type="InterPro" id="IPR034216">
    <property type="entry name" value="C5a_Peptidase"/>
</dbReference>
<dbReference type="InterPro" id="IPR013783">
    <property type="entry name" value="Ig-like_fold"/>
</dbReference>
<dbReference type="InterPro" id="IPR019931">
    <property type="entry name" value="LPXTG_anchor"/>
</dbReference>
<dbReference type="InterPro" id="IPR046450">
    <property type="entry name" value="PA_dom_sf"/>
</dbReference>
<dbReference type="InterPro" id="IPR003137">
    <property type="entry name" value="PA_domain"/>
</dbReference>
<dbReference type="InterPro" id="IPR000209">
    <property type="entry name" value="Peptidase_S8/S53_dom"/>
</dbReference>
<dbReference type="InterPro" id="IPR036852">
    <property type="entry name" value="Peptidase_S8/S53_dom_sf"/>
</dbReference>
<dbReference type="InterPro" id="IPR023827">
    <property type="entry name" value="Peptidase_S8_Asp-AS"/>
</dbReference>
<dbReference type="InterPro" id="IPR022398">
    <property type="entry name" value="Peptidase_S8_His-AS"/>
</dbReference>
<dbReference type="InterPro" id="IPR023828">
    <property type="entry name" value="Peptidase_S8_Ser-AS"/>
</dbReference>
<dbReference type="InterPro" id="IPR050131">
    <property type="entry name" value="Peptidase_S8_subtilisin-like"/>
</dbReference>
<dbReference type="InterPro" id="IPR015500">
    <property type="entry name" value="Peptidase_S8_subtilisin-rel"/>
</dbReference>
<dbReference type="InterPro" id="IPR053869">
    <property type="entry name" value="ScpA_Fn3_3rd"/>
</dbReference>
<dbReference type="PANTHER" id="PTHR43806:SF11">
    <property type="entry name" value="CEREVISIN-RELATED"/>
    <property type="match status" value="1"/>
</dbReference>
<dbReference type="PANTHER" id="PTHR43806">
    <property type="entry name" value="PEPTIDASE S8"/>
    <property type="match status" value="1"/>
</dbReference>
<dbReference type="Pfam" id="PF13585">
    <property type="entry name" value="CHU_C"/>
    <property type="match status" value="1"/>
</dbReference>
<dbReference type="Pfam" id="PF06280">
    <property type="entry name" value="fn3_5"/>
    <property type="match status" value="1"/>
</dbReference>
<dbReference type="Pfam" id="PF02225">
    <property type="entry name" value="PA"/>
    <property type="match status" value="1"/>
</dbReference>
<dbReference type="Pfam" id="PF00082">
    <property type="entry name" value="Peptidase_S8"/>
    <property type="match status" value="1"/>
</dbReference>
<dbReference type="Pfam" id="PF22143">
    <property type="entry name" value="ScpA_C"/>
    <property type="match status" value="1"/>
</dbReference>
<dbReference type="PRINTS" id="PR00723">
    <property type="entry name" value="SUBTILISIN"/>
</dbReference>
<dbReference type="SUPFAM" id="SSF52025">
    <property type="entry name" value="PA domain"/>
    <property type="match status" value="1"/>
</dbReference>
<dbReference type="SUPFAM" id="SSF52743">
    <property type="entry name" value="Subtilisin-like"/>
    <property type="match status" value="1"/>
</dbReference>
<dbReference type="PROSITE" id="PS50847">
    <property type="entry name" value="GRAM_POS_ANCHORING"/>
    <property type="match status" value="1"/>
</dbReference>
<dbReference type="PROSITE" id="PS51892">
    <property type="entry name" value="SUBTILASE"/>
    <property type="match status" value="1"/>
</dbReference>
<dbReference type="PROSITE" id="PS00136">
    <property type="entry name" value="SUBTILASE_ASP"/>
    <property type="match status" value="1"/>
</dbReference>
<dbReference type="PROSITE" id="PS00137">
    <property type="entry name" value="SUBTILASE_HIS"/>
    <property type="match status" value="1"/>
</dbReference>
<dbReference type="PROSITE" id="PS00138">
    <property type="entry name" value="SUBTILASE_SER"/>
    <property type="match status" value="1"/>
</dbReference>
<proteinExistence type="evidence at protein level"/>
<protein>
    <recommendedName>
        <fullName evidence="7">C5a peptidase</fullName>
        <ecNumber evidence="6">3.4.21.110</ecNumber>
    </recommendedName>
    <alternativeName>
        <fullName evidence="7">SCP</fullName>
    </alternativeName>
</protein>